<reference key="1">
    <citation type="journal article" date="2005" name="J. Bacteriol.">
        <title>Insights on evolution of virulence and resistance from the complete genome analysis of an early methicillin-resistant Staphylococcus aureus strain and a biofilm-producing methicillin-resistant Staphylococcus epidermidis strain.</title>
        <authorList>
            <person name="Gill S.R."/>
            <person name="Fouts D.E."/>
            <person name="Archer G.L."/>
            <person name="Mongodin E.F."/>
            <person name="DeBoy R.T."/>
            <person name="Ravel J."/>
            <person name="Paulsen I.T."/>
            <person name="Kolonay J.F."/>
            <person name="Brinkac L.M."/>
            <person name="Beanan M.J."/>
            <person name="Dodson R.J."/>
            <person name="Daugherty S.C."/>
            <person name="Madupu R."/>
            <person name="Angiuoli S.V."/>
            <person name="Durkin A.S."/>
            <person name="Haft D.H."/>
            <person name="Vamathevan J.J."/>
            <person name="Khouri H."/>
            <person name="Utterback T.R."/>
            <person name="Lee C."/>
            <person name="Dimitrov G."/>
            <person name="Jiang L."/>
            <person name="Qin H."/>
            <person name="Weidman J."/>
            <person name="Tran K."/>
            <person name="Kang K.H."/>
            <person name="Hance I.R."/>
            <person name="Nelson K.E."/>
            <person name="Fraser C.M."/>
        </authorList>
    </citation>
    <scope>NUCLEOTIDE SEQUENCE [LARGE SCALE GENOMIC DNA]</scope>
    <source>
        <strain>COL</strain>
    </source>
</reference>
<reference key="2">
    <citation type="journal article" date="2003" name="Nucleic Acids Res.">
        <title>A nomenclature for restriction enzymes, DNA methyltransferases, homing endonucleases and their genes.</title>
        <authorList>
            <person name="Roberts R.J."/>
            <person name="Belfort M."/>
            <person name="Bestor T."/>
            <person name="Bhagwat A.S."/>
            <person name="Bickle T.A."/>
            <person name="Bitinaite J."/>
            <person name="Blumenthal R.M."/>
            <person name="Degtyarev S.K."/>
            <person name="Dryden D.T."/>
            <person name="Dybvig K."/>
            <person name="Firman K."/>
            <person name="Gromova E.S."/>
            <person name="Gumport R.I."/>
            <person name="Halford S.E."/>
            <person name="Hattman S."/>
            <person name="Heitman J."/>
            <person name="Hornby D.P."/>
            <person name="Janulaitis A."/>
            <person name="Jeltsch A."/>
            <person name="Josephsen J."/>
            <person name="Kiss A."/>
            <person name="Klaenhammer T.R."/>
            <person name="Kobayashi I."/>
            <person name="Kong H."/>
            <person name="Krueger D.H."/>
            <person name="Lacks S."/>
            <person name="Marinus M.G."/>
            <person name="Miyahara M."/>
            <person name="Morgan R.D."/>
            <person name="Murray N.E."/>
            <person name="Nagaraja V."/>
            <person name="Piekarowicz A."/>
            <person name="Pingoud A."/>
            <person name="Raleigh E."/>
            <person name="Rao D.N."/>
            <person name="Reich N."/>
            <person name="Repin V.E."/>
            <person name="Selker E.U."/>
            <person name="Shaw P.C."/>
            <person name="Stein D.C."/>
            <person name="Stoddard B.L."/>
            <person name="Szybalski W."/>
            <person name="Trautner T.A."/>
            <person name="Van Etten J.L."/>
            <person name="Vitor J.M."/>
            <person name="Wilson G.G."/>
            <person name="Xu S.Y."/>
        </authorList>
    </citation>
    <scope>NOMENCLATURE</scope>
    <scope>SUBTYPE</scope>
</reference>
<sequence length="929" mass="109227">MAYQSEYALENEMMNQLEQLGYERVTIRDNKQLLDNFRTILNERHADKLEGNPLTDKEFQRLLTMIDGKSIFESARILRDKLPLRRDDESEIYLSFLDTKSWCKNKFQVTNQVSVEDTYKARYDVTILINGLPLVQVELKRRGIDINEAFNQVKRYRKQNYTGLFRYIQMFIISNGVETRYFSNNDSELLKSHMFYWSDKQNNRINTLQSFAESFMRPCQLAKMISRYMIINETDRILMAMRPYQVYAVEALIQQATETGNNGYVWHTTGSGKTLTSFKASQILSQQDDIKKVIFLVDRKDLDSQTEEEFNKFAKGAVDKTFNTSQLVRQLNDKSLPLIVTTIQKMAKAIQGNAPLLEQYKTNKVVFIIDECHRSQFGDMHRLVKQHFKNAQYFGFTGTPRFPENSSQDGRTTADIFGRCLHTYLIRDAIHDGNVLGFSVDYINTFKNKALKAEDNSMVEAIDTEEVWLADKRVELVTRHIINNHDKYTRNRQYSSIFTVQSIHALIKYYETFKRLNKKLEQPLTIAGIFTFKPNEDDRDGEVPYHSREKLEIMISDYNKKFETNFSTDTTNEYFNHISKNVKKGVKDSKIDILIVVNMFLTGFDSKVLNTLYVDKNLMYHDLIQAYSRTNRVEKESKPFGKIVNYRDLKKETDDALRVFSQTNDTDTILMRSYEEYKKEFMDAYRELKMIVPTPHMVDDIQDEEELKRFVEAYRLLAKIILRLKAFDEFEFTIDEIGMDEQENEDYKSKYLAVYDQVKRATAEKNKVSILNDIDFEIEMMRNDTINVNYIMNILRQIDLEDKAEQRRNQEQIRRILDHADDPTLRLKRDLIREFIDNVVPSLNKDDDIDQEYVNFESIKKEAEFKGFAGERSIDEQALKTISNDYQYSGVVNPHHLKKMIGDLPLKEKRKARKAIESFVAETTEKYGV</sequence>
<proteinExistence type="inferred from homology"/>
<accession>Q5HJH8</accession>
<feature type="chain" id="PRO_0000077265" description="Type I restriction enzyme SauCOLORF180P endonuclease subunit">
    <location>
        <begin position="1"/>
        <end position="929"/>
    </location>
</feature>
<feature type="domain" description="Helicase ATP-binding" evidence="2">
    <location>
        <begin position="254"/>
        <end position="418"/>
    </location>
</feature>
<feature type="binding site" evidence="2">
    <location>
        <begin position="268"/>
        <end position="274"/>
    </location>
    <ligand>
        <name>ATP</name>
        <dbReference type="ChEBI" id="CHEBI:30616"/>
    </ligand>
</feature>
<name>HSDR_STAAC</name>
<protein>
    <recommendedName>
        <fullName evidence="3">Type I restriction enzyme SauCOLORF180P endonuclease subunit</fullName>
        <shortName>R protein</shortName>
        <shortName evidence="3">SauCOLORF180P</shortName>
        <ecNumber evidence="1">3.1.21.3</ecNumber>
    </recommendedName>
    <alternativeName>
        <fullName>Type-1 restriction enzyme R protein</fullName>
    </alternativeName>
</protein>
<dbReference type="EC" id="3.1.21.3" evidence="1"/>
<dbReference type="EMBL" id="CP000046">
    <property type="protein sequence ID" value="AAW37476.1"/>
    <property type="molecule type" value="Genomic_DNA"/>
</dbReference>
<dbReference type="RefSeq" id="WP_000331347.1">
    <property type="nucleotide sequence ID" value="NZ_JBGOFO010000001.1"/>
</dbReference>
<dbReference type="SMR" id="Q5HJH8"/>
<dbReference type="REBASE" id="10753">
    <property type="entry name" value="SauCOLORF180P"/>
</dbReference>
<dbReference type="REBASE" id="162027">
    <property type="entry name" value="Wso11848ORF763P"/>
</dbReference>
<dbReference type="REBASE" id="190418">
    <property type="entry name" value="Bce021ORF873P"/>
</dbReference>
<dbReference type="REBASE" id="203438">
    <property type="entry name" value="Lpl434ORF2272P"/>
</dbReference>
<dbReference type="REBASE" id="203795">
    <property type="entry name" value="Ppe892ORF47P"/>
</dbReference>
<dbReference type="REBASE" id="204920">
    <property type="entry name" value="Ppe194ORF1864P"/>
</dbReference>
<dbReference type="REBASE" id="618977">
    <property type="entry name" value="LspCC1ORF2247P"/>
</dbReference>
<dbReference type="REBASE" id="618980">
    <property type="entry name" value="LspCC1ORF1998P"/>
</dbReference>
<dbReference type="KEGG" id="sac:SACOL0180"/>
<dbReference type="HOGENOM" id="CLU_004848_1_0_9"/>
<dbReference type="PRO" id="PR:Q5HJH8"/>
<dbReference type="Proteomes" id="UP000000530">
    <property type="component" value="Chromosome"/>
</dbReference>
<dbReference type="GO" id="GO:0005524">
    <property type="term" value="F:ATP binding"/>
    <property type="evidence" value="ECO:0007669"/>
    <property type="project" value="UniProtKB-KW"/>
</dbReference>
<dbReference type="GO" id="GO:0003677">
    <property type="term" value="F:DNA binding"/>
    <property type="evidence" value="ECO:0007669"/>
    <property type="project" value="UniProtKB-KW"/>
</dbReference>
<dbReference type="GO" id="GO:0009035">
    <property type="term" value="F:type I site-specific deoxyribonuclease activity"/>
    <property type="evidence" value="ECO:0007669"/>
    <property type="project" value="UniProtKB-EC"/>
</dbReference>
<dbReference type="GO" id="GO:0009307">
    <property type="term" value="P:DNA restriction-modification system"/>
    <property type="evidence" value="ECO:0007669"/>
    <property type="project" value="UniProtKB-KW"/>
</dbReference>
<dbReference type="CDD" id="cd18030">
    <property type="entry name" value="DEXHc_RE_I_HsdR"/>
    <property type="match status" value="1"/>
</dbReference>
<dbReference type="CDD" id="cd22332">
    <property type="entry name" value="HsdR_N"/>
    <property type="match status" value="1"/>
</dbReference>
<dbReference type="CDD" id="cd18800">
    <property type="entry name" value="SF2_C_EcoR124I-like"/>
    <property type="match status" value="1"/>
</dbReference>
<dbReference type="Gene3D" id="1.20.58.2040">
    <property type="match status" value="1"/>
</dbReference>
<dbReference type="Gene3D" id="3.90.1570.50">
    <property type="match status" value="1"/>
</dbReference>
<dbReference type="Gene3D" id="3.40.50.300">
    <property type="entry name" value="P-loop containing nucleotide triphosphate hydrolases"/>
    <property type="match status" value="2"/>
</dbReference>
<dbReference type="InterPro" id="IPR014001">
    <property type="entry name" value="Helicase_ATP-bd"/>
</dbReference>
<dbReference type="InterPro" id="IPR055180">
    <property type="entry name" value="HsdR_RecA-like_helicase_dom_2"/>
</dbReference>
<dbReference type="InterPro" id="IPR027417">
    <property type="entry name" value="P-loop_NTPase"/>
</dbReference>
<dbReference type="InterPro" id="IPR007409">
    <property type="entry name" value="Restrct_endonuc_type1_HsdR_N"/>
</dbReference>
<dbReference type="InterPro" id="IPR004473">
    <property type="entry name" value="Restrct_endonuc_typeI_HsdR"/>
</dbReference>
<dbReference type="InterPro" id="IPR040980">
    <property type="entry name" value="SWI2_SNF2"/>
</dbReference>
<dbReference type="InterPro" id="IPR051268">
    <property type="entry name" value="Type-I_R_enzyme_R_subunit"/>
</dbReference>
<dbReference type="InterPro" id="IPR022625">
    <property type="entry name" value="TypeI_RM_Rsu_C"/>
</dbReference>
<dbReference type="NCBIfam" id="TIGR00348">
    <property type="entry name" value="hsdR"/>
    <property type="match status" value="1"/>
</dbReference>
<dbReference type="PANTHER" id="PTHR30195:SF16">
    <property type="entry name" value="TYPE I RESTRICTION ENZYME ENDONUCLEASE SUBUNIT"/>
    <property type="match status" value="1"/>
</dbReference>
<dbReference type="PANTHER" id="PTHR30195">
    <property type="entry name" value="TYPE I SITE-SPECIFIC DEOXYRIBONUCLEASE PROTEIN SUBUNIT M AND R"/>
    <property type="match status" value="1"/>
</dbReference>
<dbReference type="Pfam" id="PF12008">
    <property type="entry name" value="EcoR124_C"/>
    <property type="match status" value="1"/>
</dbReference>
<dbReference type="Pfam" id="PF04313">
    <property type="entry name" value="HSDR_N"/>
    <property type="match status" value="1"/>
</dbReference>
<dbReference type="Pfam" id="PF18766">
    <property type="entry name" value="SWI2_SNF2"/>
    <property type="match status" value="1"/>
</dbReference>
<dbReference type="Pfam" id="PF22679">
    <property type="entry name" value="T1R_D3-like"/>
    <property type="match status" value="1"/>
</dbReference>
<dbReference type="SMART" id="SM00487">
    <property type="entry name" value="DEXDc"/>
    <property type="match status" value="1"/>
</dbReference>
<dbReference type="SUPFAM" id="SSF52540">
    <property type="entry name" value="P-loop containing nucleoside triphosphate hydrolases"/>
    <property type="match status" value="1"/>
</dbReference>
<dbReference type="PROSITE" id="PS51192">
    <property type="entry name" value="HELICASE_ATP_BIND_1"/>
    <property type="match status" value="1"/>
</dbReference>
<evidence type="ECO:0000250" key="1">
    <source>
        <dbReference type="UniProtKB" id="P08956"/>
    </source>
</evidence>
<evidence type="ECO:0000255" key="2">
    <source>
        <dbReference type="PROSITE-ProRule" id="PRU00541"/>
    </source>
</evidence>
<evidence type="ECO:0000303" key="3">
    <source>
    </source>
</evidence>
<evidence type="ECO:0000305" key="4"/>
<keyword id="KW-0067">ATP-binding</keyword>
<keyword id="KW-0238">DNA-binding</keyword>
<keyword id="KW-0255">Endonuclease</keyword>
<keyword id="KW-0378">Hydrolase</keyword>
<keyword id="KW-0540">Nuclease</keyword>
<keyword id="KW-0547">Nucleotide-binding</keyword>
<keyword id="KW-0680">Restriction system</keyword>
<gene>
    <name evidence="4" type="primary">hsdR</name>
    <name type="ordered locus">SACOL0180</name>
</gene>
<organism>
    <name type="scientific">Staphylococcus aureus (strain COL)</name>
    <dbReference type="NCBI Taxonomy" id="93062"/>
    <lineage>
        <taxon>Bacteria</taxon>
        <taxon>Bacillati</taxon>
        <taxon>Bacillota</taxon>
        <taxon>Bacilli</taxon>
        <taxon>Bacillales</taxon>
        <taxon>Staphylococcaceae</taxon>
        <taxon>Staphylococcus</taxon>
    </lineage>
</organism>
<comment type="function">
    <text evidence="1 3">The restriction (R) subunit of a type I restriction enzyme that recognizes an undetermined sequence and cleaves a random distance away. Subunit R is required for both nuclease and ATPase activities, but not for modification. After locating a non-methylated recognition site, the enzyme complex serves as a molecular motor that translocates DNA in an ATP-dependent manner until a collision occurs that triggers cleavage.</text>
</comment>
<comment type="catalytic activity">
    <reaction evidence="1">
        <text>Endonucleolytic cleavage of DNA to give random double-stranded fragments with terminal 5'-phosphates, ATP is simultaneously hydrolyzed.</text>
        <dbReference type="EC" id="3.1.21.3"/>
    </reaction>
</comment>
<comment type="subunit">
    <text evidence="1">The type I restriction/modification system is composed of three polypeptides R, M and S.</text>
</comment>
<comment type="miscellaneous">
    <text evidence="1">Type I restriction and modification enzymes are complex, multifunctional systems which require ATP, S-adenosyl methionine and magnesium as cofactors and, in addition to their endonucleolytic and methylase activities, are potent DNA-dependent ATPases.</text>
</comment>
<comment type="similarity">
    <text evidence="4">Belongs to the HsdR family.</text>
</comment>